<sequence>MSLEPAMTTPDVLRVEVLSEALPYIQRFRGRRVVIKYGGAAMVREDLRDAVFRDVALLASVGVEPVVVHGGGPEINQWLNRLSIEPVFQEGLRVTCPDTMDVVEMVLVGRVNKQIVNGLNRVGGRAVGLSGADGGLVQARTHGDGSLGLVGDVAQVDPSVIIPLLDQGYIPVISSVAPNHEGQPYNINADTVAGELAAAMDAEKLILLTDTPGILRDRDDPESLIDQLSLSEARELIHAGVVAGGMVPKTECCIRALAQGVRAAHILDGRVPHSLLLEVFTNSGIGTMVLGSRQQG</sequence>
<reference key="1">
    <citation type="submission" date="2006-05" db="EMBL/GenBank/DDBJ databases">
        <authorList>
            <consortium name="Genoscope"/>
        </authorList>
    </citation>
    <scope>NUCLEOTIDE SEQUENCE [LARGE SCALE GENOMIC DNA]</scope>
    <source>
        <strain>RCC307</strain>
    </source>
</reference>
<organism>
    <name type="scientific">Synechococcus sp. (strain RCC307)</name>
    <dbReference type="NCBI Taxonomy" id="316278"/>
    <lineage>
        <taxon>Bacteria</taxon>
        <taxon>Bacillati</taxon>
        <taxon>Cyanobacteriota</taxon>
        <taxon>Cyanophyceae</taxon>
        <taxon>Synechococcales</taxon>
        <taxon>Synechococcaceae</taxon>
        <taxon>Synechococcus</taxon>
    </lineage>
</organism>
<comment type="function">
    <text evidence="1">Catalyzes the ATP-dependent phosphorylation of N-acetyl-L-glutamate.</text>
</comment>
<comment type="catalytic activity">
    <reaction evidence="1">
        <text>N-acetyl-L-glutamate + ATP = N-acetyl-L-glutamyl 5-phosphate + ADP</text>
        <dbReference type="Rhea" id="RHEA:14629"/>
        <dbReference type="ChEBI" id="CHEBI:30616"/>
        <dbReference type="ChEBI" id="CHEBI:44337"/>
        <dbReference type="ChEBI" id="CHEBI:57936"/>
        <dbReference type="ChEBI" id="CHEBI:456216"/>
        <dbReference type="EC" id="2.7.2.8"/>
    </reaction>
</comment>
<comment type="pathway">
    <text evidence="1">Amino-acid biosynthesis; L-arginine biosynthesis; N(2)-acetyl-L-ornithine from L-glutamate: step 2/4.</text>
</comment>
<comment type="subcellular location">
    <subcellularLocation>
        <location evidence="1">Cytoplasm</location>
    </subcellularLocation>
</comment>
<comment type="similarity">
    <text evidence="1">Belongs to the acetylglutamate kinase family. ArgB subfamily.</text>
</comment>
<keyword id="KW-0028">Amino-acid biosynthesis</keyword>
<keyword id="KW-0055">Arginine biosynthesis</keyword>
<keyword id="KW-0067">ATP-binding</keyword>
<keyword id="KW-0963">Cytoplasm</keyword>
<keyword id="KW-0418">Kinase</keyword>
<keyword id="KW-0547">Nucleotide-binding</keyword>
<keyword id="KW-1185">Reference proteome</keyword>
<keyword id="KW-0808">Transferase</keyword>
<gene>
    <name evidence="1" type="primary">argB</name>
    <name type="ordered locus">SynRCC307_0886</name>
</gene>
<name>ARGB_SYNR3</name>
<evidence type="ECO:0000255" key="1">
    <source>
        <dbReference type="HAMAP-Rule" id="MF_00082"/>
    </source>
</evidence>
<dbReference type="EC" id="2.7.2.8" evidence="1"/>
<dbReference type="EMBL" id="CT978603">
    <property type="protein sequence ID" value="CAK27789.1"/>
    <property type="molecule type" value="Genomic_DNA"/>
</dbReference>
<dbReference type="SMR" id="A5GSD0"/>
<dbReference type="STRING" id="316278.SynRCC307_0886"/>
<dbReference type="KEGG" id="syr:SynRCC307_0886"/>
<dbReference type="eggNOG" id="COG0548">
    <property type="taxonomic scope" value="Bacteria"/>
</dbReference>
<dbReference type="HOGENOM" id="CLU_053680_0_1_3"/>
<dbReference type="OrthoDB" id="9803155at2"/>
<dbReference type="UniPathway" id="UPA00068">
    <property type="reaction ID" value="UER00107"/>
</dbReference>
<dbReference type="Proteomes" id="UP000001115">
    <property type="component" value="Chromosome"/>
</dbReference>
<dbReference type="GO" id="GO:0005737">
    <property type="term" value="C:cytoplasm"/>
    <property type="evidence" value="ECO:0007669"/>
    <property type="project" value="UniProtKB-SubCell"/>
</dbReference>
<dbReference type="GO" id="GO:0003991">
    <property type="term" value="F:acetylglutamate kinase activity"/>
    <property type="evidence" value="ECO:0007669"/>
    <property type="project" value="UniProtKB-UniRule"/>
</dbReference>
<dbReference type="GO" id="GO:0005524">
    <property type="term" value="F:ATP binding"/>
    <property type="evidence" value="ECO:0007669"/>
    <property type="project" value="UniProtKB-UniRule"/>
</dbReference>
<dbReference type="GO" id="GO:0042450">
    <property type="term" value="P:arginine biosynthetic process via ornithine"/>
    <property type="evidence" value="ECO:0007669"/>
    <property type="project" value="UniProtKB-UniRule"/>
</dbReference>
<dbReference type="GO" id="GO:0006526">
    <property type="term" value="P:L-arginine biosynthetic process"/>
    <property type="evidence" value="ECO:0007669"/>
    <property type="project" value="UniProtKB-UniPathway"/>
</dbReference>
<dbReference type="CDD" id="cd04250">
    <property type="entry name" value="AAK_NAGK-C"/>
    <property type="match status" value="1"/>
</dbReference>
<dbReference type="FunFam" id="3.40.1160.10:FF:000004">
    <property type="entry name" value="Acetylglutamate kinase"/>
    <property type="match status" value="1"/>
</dbReference>
<dbReference type="Gene3D" id="3.40.1160.10">
    <property type="entry name" value="Acetylglutamate kinase-like"/>
    <property type="match status" value="1"/>
</dbReference>
<dbReference type="HAMAP" id="MF_00082">
    <property type="entry name" value="ArgB"/>
    <property type="match status" value="1"/>
</dbReference>
<dbReference type="InterPro" id="IPR036393">
    <property type="entry name" value="AceGlu_kinase-like_sf"/>
</dbReference>
<dbReference type="InterPro" id="IPR004662">
    <property type="entry name" value="AcgluKinase_fam"/>
</dbReference>
<dbReference type="InterPro" id="IPR037528">
    <property type="entry name" value="ArgB"/>
</dbReference>
<dbReference type="InterPro" id="IPR001048">
    <property type="entry name" value="Asp/Glu/Uridylate_kinase"/>
</dbReference>
<dbReference type="InterPro" id="IPR001057">
    <property type="entry name" value="Glu/AcGlu_kinase"/>
</dbReference>
<dbReference type="InterPro" id="IPR041727">
    <property type="entry name" value="NAGK-C"/>
</dbReference>
<dbReference type="NCBIfam" id="TIGR00761">
    <property type="entry name" value="argB"/>
    <property type="match status" value="1"/>
</dbReference>
<dbReference type="PANTHER" id="PTHR23342">
    <property type="entry name" value="N-ACETYLGLUTAMATE SYNTHASE"/>
    <property type="match status" value="1"/>
</dbReference>
<dbReference type="PANTHER" id="PTHR23342:SF0">
    <property type="entry name" value="N-ACETYLGLUTAMATE SYNTHASE, MITOCHONDRIAL"/>
    <property type="match status" value="1"/>
</dbReference>
<dbReference type="Pfam" id="PF00696">
    <property type="entry name" value="AA_kinase"/>
    <property type="match status" value="1"/>
</dbReference>
<dbReference type="PIRSF" id="PIRSF000728">
    <property type="entry name" value="NAGK"/>
    <property type="match status" value="1"/>
</dbReference>
<dbReference type="PRINTS" id="PR00474">
    <property type="entry name" value="GLU5KINASE"/>
</dbReference>
<dbReference type="SUPFAM" id="SSF53633">
    <property type="entry name" value="Carbamate kinase-like"/>
    <property type="match status" value="1"/>
</dbReference>
<accession>A5GSD0</accession>
<feature type="chain" id="PRO_0000335669" description="Acetylglutamate kinase">
    <location>
        <begin position="1"/>
        <end position="296"/>
    </location>
</feature>
<feature type="binding site" evidence="1">
    <location>
        <begin position="71"/>
        <end position="72"/>
    </location>
    <ligand>
        <name>substrate</name>
    </ligand>
</feature>
<feature type="binding site" evidence="1">
    <location>
        <position position="93"/>
    </location>
    <ligand>
        <name>substrate</name>
    </ligand>
</feature>
<feature type="binding site" evidence="1">
    <location>
        <position position="186"/>
    </location>
    <ligand>
        <name>substrate</name>
    </ligand>
</feature>
<feature type="site" description="Transition state stabilizer" evidence="1">
    <location>
        <position position="36"/>
    </location>
</feature>
<feature type="site" description="Transition state stabilizer" evidence="1">
    <location>
        <position position="249"/>
    </location>
</feature>
<protein>
    <recommendedName>
        <fullName evidence="1">Acetylglutamate kinase</fullName>
        <ecNumber evidence="1">2.7.2.8</ecNumber>
    </recommendedName>
    <alternativeName>
        <fullName evidence="1">N-acetyl-L-glutamate 5-phosphotransferase</fullName>
    </alternativeName>
    <alternativeName>
        <fullName evidence="1">NAG kinase</fullName>
        <shortName evidence="1">NAGK</shortName>
    </alternativeName>
</protein>
<proteinExistence type="inferred from homology"/>